<organism>
    <name type="scientific">Prochlorococcus marinus (strain MIT 9313)</name>
    <dbReference type="NCBI Taxonomy" id="74547"/>
    <lineage>
        <taxon>Bacteria</taxon>
        <taxon>Bacillati</taxon>
        <taxon>Cyanobacteriota</taxon>
        <taxon>Cyanophyceae</taxon>
        <taxon>Synechococcales</taxon>
        <taxon>Prochlorococcaceae</taxon>
        <taxon>Prochlorococcus</taxon>
    </lineage>
</organism>
<feature type="chain" id="PRO_0000201500" description="Carboxysome shell protein CsoS1">
    <location>
        <begin position="1"/>
        <end position="103"/>
    </location>
</feature>
<feature type="domain" description="BMC" evidence="1">
    <location>
        <begin position="9"/>
        <end position="94"/>
    </location>
</feature>
<feature type="strand" evidence="8">
    <location>
        <begin position="9"/>
        <end position="17"/>
    </location>
</feature>
<feature type="helix" evidence="8">
    <location>
        <begin position="18"/>
        <end position="31"/>
    </location>
</feature>
<feature type="strand" evidence="8">
    <location>
        <begin position="35"/>
        <end position="43"/>
    </location>
</feature>
<feature type="strand" evidence="8">
    <location>
        <begin position="46"/>
        <end position="53"/>
    </location>
</feature>
<feature type="helix" evidence="8">
    <location>
        <begin position="55"/>
        <end position="69"/>
    </location>
</feature>
<feature type="strand" evidence="8">
    <location>
        <begin position="76"/>
        <end position="84"/>
    </location>
</feature>
<feature type="helix" evidence="8">
    <location>
        <begin position="87"/>
        <end position="93"/>
    </location>
</feature>
<accession>Q7V6F7</accession>
<comment type="function">
    <text evidence="5">One of the shell proteins of the carboxysome, a polyhedral inclusion where RuBisCO (ribulose bisphosphate carboxylase, ccbL-ccbS) is sequestered. Assembles into hexamers which make sheets that form the facets of the polyhedral carboxysome.</text>
</comment>
<comment type="subunit">
    <text evidence="2 6">Homohexamer with a small central pore (PubMed:25117559). Forms a CsoS2-CsoS1-RuBisCO complex (Probable).</text>
</comment>
<comment type="subcellular location">
    <subcellularLocation>
        <location evidence="5">Carboxysome</location>
    </subcellularLocation>
    <text evidence="2">This cyanobacterium makes alpha-type carboxysomes, but upon expression in Synechococcus elongatus PCC 7942 this protein seems to be incorporated into beta-type carboxysomes.</text>
</comment>
<comment type="domain">
    <text evidence="2">The tight homohexamer forms a pore with an opening of about 5 Angstroms in diameter.</text>
</comment>
<comment type="similarity">
    <text evidence="4">Belongs to the bacterial microcompartments protein family. CsoS1 subfamily.</text>
</comment>
<name>CSOS1_PROMM</name>
<keyword id="KW-0002">3D-structure</keyword>
<keyword id="KW-1283">Bacterial microcompartment</keyword>
<keyword id="KW-0120">Carbon dioxide fixation</keyword>
<keyword id="KW-1282">Carboxysome</keyword>
<keyword id="KW-0602">Photosynthesis</keyword>
<keyword id="KW-1185">Reference proteome</keyword>
<dbReference type="EMBL" id="BX548175">
    <property type="protein sequence ID" value="CAE21381.1"/>
    <property type="molecule type" value="Genomic_DNA"/>
</dbReference>
<dbReference type="RefSeq" id="WP_011130577.1">
    <property type="nucleotide sequence ID" value="NC_005071.1"/>
</dbReference>
<dbReference type="PDB" id="4OX8">
    <property type="method" value="X-ray"/>
    <property type="resolution" value="1.90 A"/>
    <property type="chains" value="A/B/C/D/E/F=1-103"/>
</dbReference>
<dbReference type="PDBsum" id="4OX8"/>
<dbReference type="SMR" id="Q7V6F7"/>
<dbReference type="KEGG" id="pmt:PMT_1206"/>
<dbReference type="eggNOG" id="COG4577">
    <property type="taxonomic scope" value="Bacteria"/>
</dbReference>
<dbReference type="HOGENOM" id="CLU_064903_5_3_3"/>
<dbReference type="OrthoDB" id="5296101at2"/>
<dbReference type="EvolutionaryTrace" id="Q7V6F7"/>
<dbReference type="Proteomes" id="UP000001423">
    <property type="component" value="Chromosome"/>
</dbReference>
<dbReference type="GO" id="GO:0031470">
    <property type="term" value="C:carboxysome"/>
    <property type="evidence" value="ECO:0007669"/>
    <property type="project" value="UniProtKB-SubCell"/>
</dbReference>
<dbReference type="GO" id="GO:0043886">
    <property type="term" value="F:structural constituent of carboxysome shell"/>
    <property type="evidence" value="ECO:0007669"/>
    <property type="project" value="UniProtKB-ARBA"/>
</dbReference>
<dbReference type="GO" id="GO:0015977">
    <property type="term" value="P:carbon fixation"/>
    <property type="evidence" value="ECO:0007669"/>
    <property type="project" value="UniProtKB-KW"/>
</dbReference>
<dbReference type="GO" id="GO:0015979">
    <property type="term" value="P:photosynthesis"/>
    <property type="evidence" value="ECO:0007669"/>
    <property type="project" value="UniProtKB-KW"/>
</dbReference>
<dbReference type="CDD" id="cd07058">
    <property type="entry name" value="BMC_CsoS1"/>
    <property type="match status" value="1"/>
</dbReference>
<dbReference type="Gene3D" id="3.30.70.1710">
    <property type="match status" value="1"/>
</dbReference>
<dbReference type="InterPro" id="IPR020808">
    <property type="entry name" value="Bact_microcomp_CS"/>
</dbReference>
<dbReference type="InterPro" id="IPR000249">
    <property type="entry name" value="BMC_dom"/>
</dbReference>
<dbReference type="InterPro" id="IPR050575">
    <property type="entry name" value="BMC_shell"/>
</dbReference>
<dbReference type="InterPro" id="IPR037233">
    <property type="entry name" value="CcmK-like_sf"/>
</dbReference>
<dbReference type="InterPro" id="IPR044872">
    <property type="entry name" value="CcmK/CsoS1_BMC"/>
</dbReference>
<dbReference type="PANTHER" id="PTHR33941:SF11">
    <property type="entry name" value="BACTERIAL MICROCOMPARTMENT SHELL PROTEIN PDUJ"/>
    <property type="match status" value="1"/>
</dbReference>
<dbReference type="PANTHER" id="PTHR33941">
    <property type="entry name" value="PROPANEDIOL UTILIZATION PROTEIN PDUA"/>
    <property type="match status" value="1"/>
</dbReference>
<dbReference type="Pfam" id="PF00936">
    <property type="entry name" value="BMC"/>
    <property type="match status" value="1"/>
</dbReference>
<dbReference type="SMART" id="SM00877">
    <property type="entry name" value="BMC"/>
    <property type="match status" value="1"/>
</dbReference>
<dbReference type="SUPFAM" id="SSF143414">
    <property type="entry name" value="CcmK-like"/>
    <property type="match status" value="1"/>
</dbReference>
<dbReference type="PROSITE" id="PS01139">
    <property type="entry name" value="BMC_1"/>
    <property type="match status" value="1"/>
</dbReference>
<dbReference type="PROSITE" id="PS51930">
    <property type="entry name" value="BMC_2"/>
    <property type="match status" value="1"/>
</dbReference>
<reference key="1">
    <citation type="journal article" date="2003" name="Nature">
        <title>Genome divergence in two Prochlorococcus ecotypes reflects oceanic niche differentiation.</title>
        <authorList>
            <person name="Rocap G."/>
            <person name="Larimer F.W."/>
            <person name="Lamerdin J.E."/>
            <person name="Malfatti S."/>
            <person name="Chain P."/>
            <person name="Ahlgren N.A."/>
            <person name="Arellano A."/>
            <person name="Coleman M."/>
            <person name="Hauser L."/>
            <person name="Hess W.R."/>
            <person name="Johnson Z.I."/>
            <person name="Land M.L."/>
            <person name="Lindell D."/>
            <person name="Post A.F."/>
            <person name="Regala W."/>
            <person name="Shah M."/>
            <person name="Shaw S.L."/>
            <person name="Steglich C."/>
            <person name="Sullivan M.B."/>
            <person name="Ting C.S."/>
            <person name="Tolonen A."/>
            <person name="Webb E.A."/>
            <person name="Zinser E.R."/>
            <person name="Chisholm S.W."/>
        </authorList>
    </citation>
    <scope>NUCLEOTIDE SEQUENCE [LARGE SCALE GENOMIC DNA]</scope>
    <source>
        <strain>MIT 9313</strain>
    </source>
</reference>
<reference key="2">
    <citation type="journal article" date="2015" name="Life">
        <title>Advances in Understanding Carboxysome Assembly in Prochlorococcus and Synechococcus Implicate CsoS2 as a Critical Component.</title>
        <authorList>
            <person name="Cai F."/>
            <person name="Dou Z."/>
            <person name="Bernstein S.L."/>
            <person name="Leverenz R."/>
            <person name="Williams E.B."/>
            <person name="Heinhorst S."/>
            <person name="Shively J."/>
            <person name="Cannon G.C."/>
            <person name="Kerfeld C.A."/>
        </authorList>
    </citation>
    <scope>FUNCTION</scope>
    <scope>SUBUNIT</scope>
    <scope>DOMAIN</scope>
    <source>
        <strain>MIT 9313</strain>
    </source>
</reference>
<reference evidence="7" key="3">
    <citation type="journal article" date="2015" name="ACS Synth. Biol.">
        <title>Engineering bacterial microcompartment shells: chimeric shell proteins and chimeric carboxysome shells.</title>
        <authorList>
            <person name="Cai F."/>
            <person name="Sutter M."/>
            <person name="Bernstein S.L."/>
            <person name="Kinney J.N."/>
            <person name="Kerfeld C.A."/>
        </authorList>
    </citation>
    <scope>X-RAY CRYSTALLOGRAPHY (1.90 ANGSTROMS)</scope>
    <scope>SUBUNIT</scope>
    <scope>SUBCELLULAR LOCATION</scope>
    <scope>DOMAIN</scope>
    <source>
        <strain>MIT 9313</strain>
    </source>
</reference>
<evidence type="ECO:0000255" key="1">
    <source>
        <dbReference type="PROSITE-ProRule" id="PRU01278"/>
    </source>
</evidence>
<evidence type="ECO:0000269" key="2">
    <source>
    </source>
</evidence>
<evidence type="ECO:0000303" key="3">
    <source>
    </source>
</evidence>
<evidence type="ECO:0000305" key="4"/>
<evidence type="ECO:0000305" key="5">
    <source>
    </source>
</evidence>
<evidence type="ECO:0000305" key="6">
    <source>
    </source>
</evidence>
<evidence type="ECO:0007744" key="7">
    <source>
        <dbReference type="PDB" id="4OX8"/>
    </source>
</evidence>
<evidence type="ECO:0007829" key="8">
    <source>
        <dbReference type="PDB" id="4OX8"/>
    </source>
</evidence>
<proteinExistence type="evidence at protein level"/>
<protein>
    <recommendedName>
        <fullName evidence="4">Carboxysome shell protein CsoS1</fullName>
    </recommendedName>
</protein>
<gene>
    <name evidence="3" type="primary">csoS1</name>
    <name type="ordered locus">PMT_1206</name>
</gene>
<sequence length="103" mass="10557">MASETMGIALGMIETRGLVPAIEAADAMTKAAEVRLIGREFVGGGYVTVLVRGETGAVNAAVRAGADACERVGDGLVAAHIIARPHREVEPALGNGNFLGQKD</sequence>